<dbReference type="EC" id="4.3.99.3" evidence="1"/>
<dbReference type="EMBL" id="AE000657">
    <property type="protein sequence ID" value="AAC07798.1"/>
    <property type="molecule type" value="Genomic_DNA"/>
</dbReference>
<dbReference type="PIR" id="F70474">
    <property type="entry name" value="F70474"/>
</dbReference>
<dbReference type="RefSeq" id="NP_214395.1">
    <property type="nucleotide sequence ID" value="NC_000918.1"/>
</dbReference>
<dbReference type="RefSeq" id="WP_010881331.1">
    <property type="nucleotide sequence ID" value="NC_000918.1"/>
</dbReference>
<dbReference type="SMR" id="O67826"/>
<dbReference type="FunCoup" id="O67826">
    <property type="interactions" value="109"/>
</dbReference>
<dbReference type="STRING" id="224324.aq_2035"/>
<dbReference type="EnsemblBacteria" id="AAC07798">
    <property type="protein sequence ID" value="AAC07798"/>
    <property type="gene ID" value="aq_2035"/>
</dbReference>
<dbReference type="KEGG" id="aae:aq_2035"/>
<dbReference type="PATRIC" id="fig|224324.8.peg.1572"/>
<dbReference type="eggNOG" id="COG0602">
    <property type="taxonomic scope" value="Bacteria"/>
</dbReference>
<dbReference type="HOGENOM" id="CLU_066739_2_3_0"/>
<dbReference type="InParanoid" id="O67826"/>
<dbReference type="OrthoDB" id="9792276at2"/>
<dbReference type="UniPathway" id="UPA00391"/>
<dbReference type="Proteomes" id="UP000000798">
    <property type="component" value="Chromosome"/>
</dbReference>
<dbReference type="GO" id="GO:0051539">
    <property type="term" value="F:4 iron, 4 sulfur cluster binding"/>
    <property type="evidence" value="ECO:0007669"/>
    <property type="project" value="UniProtKB-UniRule"/>
</dbReference>
<dbReference type="GO" id="GO:0016840">
    <property type="term" value="F:carbon-nitrogen lyase activity"/>
    <property type="evidence" value="ECO:0007669"/>
    <property type="project" value="UniProtKB-UniRule"/>
</dbReference>
<dbReference type="GO" id="GO:0000287">
    <property type="term" value="F:magnesium ion binding"/>
    <property type="evidence" value="ECO:0007669"/>
    <property type="project" value="UniProtKB-UniRule"/>
</dbReference>
<dbReference type="GO" id="GO:1904047">
    <property type="term" value="F:S-adenosyl-L-methionine binding"/>
    <property type="evidence" value="ECO:0007669"/>
    <property type="project" value="UniProtKB-UniRule"/>
</dbReference>
<dbReference type="GO" id="GO:0008616">
    <property type="term" value="P:queuosine biosynthetic process"/>
    <property type="evidence" value="ECO:0007669"/>
    <property type="project" value="UniProtKB-UniRule"/>
</dbReference>
<dbReference type="CDD" id="cd01335">
    <property type="entry name" value="Radical_SAM"/>
    <property type="match status" value="1"/>
</dbReference>
<dbReference type="Gene3D" id="3.20.20.70">
    <property type="entry name" value="Aldolase class I"/>
    <property type="match status" value="1"/>
</dbReference>
<dbReference type="HAMAP" id="MF_00917">
    <property type="entry name" value="QueE"/>
    <property type="match status" value="1"/>
</dbReference>
<dbReference type="InterPro" id="IPR024924">
    <property type="entry name" value="7-CO-7-deazaguanine_synth-like"/>
</dbReference>
<dbReference type="InterPro" id="IPR013785">
    <property type="entry name" value="Aldolase_TIM"/>
</dbReference>
<dbReference type="InterPro" id="IPR007197">
    <property type="entry name" value="rSAM"/>
</dbReference>
<dbReference type="PANTHER" id="PTHR42836">
    <property type="entry name" value="7-CARBOXY-7-DEAZAGUANINE SYNTHASE"/>
    <property type="match status" value="1"/>
</dbReference>
<dbReference type="PANTHER" id="PTHR42836:SF1">
    <property type="entry name" value="7-CARBOXY-7-DEAZAGUANINE SYNTHASE"/>
    <property type="match status" value="1"/>
</dbReference>
<dbReference type="Pfam" id="PF13353">
    <property type="entry name" value="Fer4_12"/>
    <property type="match status" value="1"/>
</dbReference>
<dbReference type="Pfam" id="PF04055">
    <property type="entry name" value="Radical_SAM"/>
    <property type="match status" value="1"/>
</dbReference>
<dbReference type="PIRSF" id="PIRSF000370">
    <property type="entry name" value="QueE"/>
    <property type="match status" value="1"/>
</dbReference>
<dbReference type="SFLD" id="SFLDS00029">
    <property type="entry name" value="Radical_SAM"/>
    <property type="match status" value="1"/>
</dbReference>
<dbReference type="SUPFAM" id="SSF102114">
    <property type="entry name" value="Radical SAM enzymes"/>
    <property type="match status" value="1"/>
</dbReference>
<dbReference type="PROSITE" id="PS51918">
    <property type="entry name" value="RADICAL_SAM"/>
    <property type="match status" value="1"/>
</dbReference>
<protein>
    <recommendedName>
        <fullName evidence="1">7-carboxy-7-deazaguanine synthase</fullName>
        <shortName evidence="1">CDG synthase</shortName>
        <ecNumber evidence="1">4.3.99.3</ecNumber>
    </recommendedName>
    <alternativeName>
        <fullName evidence="1">Queuosine biosynthesis protein QueE</fullName>
    </alternativeName>
</protein>
<name>QUEE_AQUAE</name>
<evidence type="ECO:0000255" key="1">
    <source>
        <dbReference type="HAMAP-Rule" id="MF_00917"/>
    </source>
</evidence>
<evidence type="ECO:0000255" key="2">
    <source>
        <dbReference type="PROSITE-ProRule" id="PRU01266"/>
    </source>
</evidence>
<accession>O67826</accession>
<organism>
    <name type="scientific">Aquifex aeolicus (strain VF5)</name>
    <dbReference type="NCBI Taxonomy" id="224324"/>
    <lineage>
        <taxon>Bacteria</taxon>
        <taxon>Pseudomonadati</taxon>
        <taxon>Aquificota</taxon>
        <taxon>Aquificia</taxon>
        <taxon>Aquificales</taxon>
        <taxon>Aquificaceae</taxon>
        <taxon>Aquifex</taxon>
    </lineage>
</organism>
<reference key="1">
    <citation type="journal article" date="1998" name="Nature">
        <title>The complete genome of the hyperthermophilic bacterium Aquifex aeolicus.</title>
        <authorList>
            <person name="Deckert G."/>
            <person name="Warren P.V."/>
            <person name="Gaasterland T."/>
            <person name="Young W.G."/>
            <person name="Lenox A.L."/>
            <person name="Graham D.E."/>
            <person name="Overbeek R."/>
            <person name="Snead M.A."/>
            <person name="Keller M."/>
            <person name="Aujay M."/>
            <person name="Huber R."/>
            <person name="Feldman R.A."/>
            <person name="Short J.M."/>
            <person name="Olsen G.J."/>
            <person name="Swanson R.V."/>
        </authorList>
    </citation>
    <scope>NUCLEOTIDE SEQUENCE [LARGE SCALE GENOMIC DNA]</scope>
    <source>
        <strain>VF5</strain>
    </source>
</reference>
<sequence length="219" mass="25336">MLRNKVRKTDTLIALNEVYESIQGEGLLVGLPSVFIRLQGCNLRCPWCDQPEALSFSGRKVKLSSLINELKKFTAKHIVITGGEPFAHRELPFIVEFLLSEGYSVQIETNGTLWVEEMEKFAEGIHITCSPKGVAKYYVHPKILKYAKELKFVVDKEFSKEVLKKEEFERFLREGKVVLQPESNRKEMMEKALKIQKELLKECYTVRVIPQVHKCFDLK</sequence>
<gene>
    <name evidence="1" type="primary">queE</name>
    <name type="ordered locus">aq_2035</name>
</gene>
<keyword id="KW-0004">4Fe-4S</keyword>
<keyword id="KW-0408">Iron</keyword>
<keyword id="KW-0411">Iron-sulfur</keyword>
<keyword id="KW-0456">Lyase</keyword>
<keyword id="KW-0460">Magnesium</keyword>
<keyword id="KW-0479">Metal-binding</keyword>
<keyword id="KW-0671">Queuosine biosynthesis</keyword>
<keyword id="KW-1185">Reference proteome</keyword>
<keyword id="KW-0949">S-adenosyl-L-methionine</keyword>
<comment type="function">
    <text evidence="1">Catalyzes the complex heterocyclic radical-mediated conversion of 6-carboxy-5,6,7,8-tetrahydropterin (CPH4) to 7-carboxy-7-deazaguanine (CDG), a step common to the biosynthetic pathways of all 7-deazapurine-containing compounds.</text>
</comment>
<comment type="catalytic activity">
    <reaction evidence="1">
        <text>6-carboxy-5,6,7,8-tetrahydropterin + H(+) = 7-carboxy-7-deazaguanine + NH4(+)</text>
        <dbReference type="Rhea" id="RHEA:27974"/>
        <dbReference type="ChEBI" id="CHEBI:15378"/>
        <dbReference type="ChEBI" id="CHEBI:28938"/>
        <dbReference type="ChEBI" id="CHEBI:61032"/>
        <dbReference type="ChEBI" id="CHEBI:61036"/>
        <dbReference type="EC" id="4.3.99.3"/>
    </reaction>
</comment>
<comment type="cofactor">
    <cofactor evidence="1">
        <name>[4Fe-4S] cluster</name>
        <dbReference type="ChEBI" id="CHEBI:49883"/>
    </cofactor>
    <text evidence="1">Binds 1 [4Fe-4S] cluster. The cluster is coordinated with 3 cysteines and an exchangeable S-adenosyl-L-methionine.</text>
</comment>
<comment type="cofactor">
    <cofactor evidence="1">
        <name>S-adenosyl-L-methionine</name>
        <dbReference type="ChEBI" id="CHEBI:59789"/>
    </cofactor>
    <text evidence="1">Binds 1 S-adenosyl-L-methionine per subunit.</text>
</comment>
<comment type="cofactor">
    <cofactor evidence="1">
        <name>Mg(2+)</name>
        <dbReference type="ChEBI" id="CHEBI:18420"/>
    </cofactor>
</comment>
<comment type="pathway">
    <text evidence="1">Purine metabolism; 7-cyano-7-deazaguanine biosynthesis.</text>
</comment>
<comment type="subunit">
    <text evidence="1">Homodimer.</text>
</comment>
<comment type="similarity">
    <text evidence="1">Belongs to the radical SAM superfamily. 7-carboxy-7-deazaguanine synthase family.</text>
</comment>
<proteinExistence type="inferred from homology"/>
<feature type="chain" id="PRO_0000416194" description="7-carboxy-7-deazaguanine synthase">
    <location>
        <begin position="1"/>
        <end position="219"/>
    </location>
</feature>
<feature type="domain" description="Radical SAM core" evidence="2">
    <location>
        <begin position="28"/>
        <end position="219"/>
    </location>
</feature>
<feature type="binding site" evidence="1">
    <location>
        <begin position="22"/>
        <end position="24"/>
    </location>
    <ligand>
        <name>substrate</name>
    </ligand>
</feature>
<feature type="binding site" evidence="1">
    <location>
        <position position="37"/>
    </location>
    <ligand>
        <name>substrate</name>
    </ligand>
</feature>
<feature type="binding site" evidence="1">
    <location>
        <position position="41"/>
    </location>
    <ligand>
        <name>[4Fe-4S] cluster</name>
        <dbReference type="ChEBI" id="CHEBI:49883"/>
        <note>4Fe-4S-S-AdoMet</note>
    </ligand>
</feature>
<feature type="binding site" evidence="1">
    <location>
        <position position="45"/>
    </location>
    <ligand>
        <name>[4Fe-4S] cluster</name>
        <dbReference type="ChEBI" id="CHEBI:49883"/>
        <note>4Fe-4S-S-AdoMet</note>
    </ligand>
</feature>
<feature type="binding site" evidence="1">
    <location>
        <position position="48"/>
    </location>
    <ligand>
        <name>[4Fe-4S] cluster</name>
        <dbReference type="ChEBI" id="CHEBI:49883"/>
        <note>4Fe-4S-S-AdoMet</note>
    </ligand>
</feature>
<feature type="binding site" evidence="1">
    <location>
        <position position="81"/>
    </location>
    <ligand>
        <name>substrate</name>
    </ligand>
</feature>
<feature type="binding site" evidence="1">
    <location>
        <position position="83"/>
    </location>
    <ligand>
        <name>S-adenosyl-L-methionine</name>
        <dbReference type="ChEBI" id="CHEBI:59789"/>
    </ligand>
</feature>
<feature type="binding site" evidence="1">
    <location>
        <begin position="130"/>
        <end position="132"/>
    </location>
    <ligand>
        <name>S-adenosyl-L-methionine</name>
        <dbReference type="ChEBI" id="CHEBI:59789"/>
    </ligand>
</feature>